<reference key="1">
    <citation type="journal article" date="2011" name="Stand. Genomic Sci.">
        <title>Complete genome sequence of 'Thioalkalivibrio sulfidophilus' HL-EbGr7.</title>
        <authorList>
            <person name="Muyzer G."/>
            <person name="Sorokin D.Y."/>
            <person name="Mavromatis K."/>
            <person name="Lapidus A."/>
            <person name="Clum A."/>
            <person name="Ivanova N."/>
            <person name="Pati A."/>
            <person name="d'Haeseleer P."/>
            <person name="Woyke T."/>
            <person name="Kyrpides N.C."/>
        </authorList>
    </citation>
    <scope>NUCLEOTIDE SEQUENCE [LARGE SCALE GENOMIC DNA]</scope>
    <source>
        <strain>HL-EbGR7</strain>
    </source>
</reference>
<protein>
    <recommendedName>
        <fullName evidence="1">Acetyl-coenzyme A carboxylase carboxyl transferase subunit alpha</fullName>
        <shortName evidence="1">ACCase subunit alpha</shortName>
        <shortName evidence="1">Acetyl-CoA carboxylase carboxyltransferase subunit alpha</shortName>
        <ecNumber evidence="1">2.1.3.15</ecNumber>
    </recommendedName>
</protein>
<evidence type="ECO:0000255" key="1">
    <source>
        <dbReference type="HAMAP-Rule" id="MF_00823"/>
    </source>
</evidence>
<evidence type="ECO:0000255" key="2">
    <source>
        <dbReference type="PROSITE-ProRule" id="PRU01137"/>
    </source>
</evidence>
<feature type="chain" id="PRO_1000148758" description="Acetyl-coenzyme A carboxylase carboxyl transferase subunit alpha">
    <location>
        <begin position="1"/>
        <end position="319"/>
    </location>
</feature>
<feature type="domain" description="CoA carboxyltransferase C-terminal" evidence="2">
    <location>
        <begin position="32"/>
        <end position="293"/>
    </location>
</feature>
<comment type="function">
    <text evidence="1">Component of the acetyl coenzyme A carboxylase (ACC) complex. First, biotin carboxylase catalyzes the carboxylation of biotin on its carrier protein (BCCP) and then the CO(2) group is transferred by the carboxyltransferase to acetyl-CoA to form malonyl-CoA.</text>
</comment>
<comment type="catalytic activity">
    <reaction evidence="1">
        <text>N(6)-carboxybiotinyl-L-lysyl-[protein] + acetyl-CoA = N(6)-biotinyl-L-lysyl-[protein] + malonyl-CoA</text>
        <dbReference type="Rhea" id="RHEA:54728"/>
        <dbReference type="Rhea" id="RHEA-COMP:10505"/>
        <dbReference type="Rhea" id="RHEA-COMP:10506"/>
        <dbReference type="ChEBI" id="CHEBI:57288"/>
        <dbReference type="ChEBI" id="CHEBI:57384"/>
        <dbReference type="ChEBI" id="CHEBI:83144"/>
        <dbReference type="ChEBI" id="CHEBI:83145"/>
        <dbReference type="EC" id="2.1.3.15"/>
    </reaction>
</comment>
<comment type="pathway">
    <text evidence="1">Lipid metabolism; malonyl-CoA biosynthesis; malonyl-CoA from acetyl-CoA: step 1/1.</text>
</comment>
<comment type="subunit">
    <text evidence="1">Acetyl-CoA carboxylase is a heterohexamer composed of biotin carboxyl carrier protein (AccB), biotin carboxylase (AccC) and two subunits each of ACCase subunit alpha (AccA) and ACCase subunit beta (AccD).</text>
</comment>
<comment type="subcellular location">
    <subcellularLocation>
        <location evidence="1">Cytoplasm</location>
    </subcellularLocation>
</comment>
<comment type="similarity">
    <text evidence="1">Belongs to the AccA family.</text>
</comment>
<name>ACCA_THISH</name>
<keyword id="KW-0067">ATP-binding</keyword>
<keyword id="KW-0963">Cytoplasm</keyword>
<keyword id="KW-0275">Fatty acid biosynthesis</keyword>
<keyword id="KW-0276">Fatty acid metabolism</keyword>
<keyword id="KW-0444">Lipid biosynthesis</keyword>
<keyword id="KW-0443">Lipid metabolism</keyword>
<keyword id="KW-0547">Nucleotide-binding</keyword>
<keyword id="KW-1185">Reference proteome</keyword>
<keyword id="KW-0808">Transferase</keyword>
<proteinExistence type="inferred from homology"/>
<organism>
    <name type="scientific">Thioalkalivibrio sulfidiphilus (strain HL-EbGR7)</name>
    <dbReference type="NCBI Taxonomy" id="396588"/>
    <lineage>
        <taxon>Bacteria</taxon>
        <taxon>Pseudomonadati</taxon>
        <taxon>Pseudomonadota</taxon>
        <taxon>Gammaproteobacteria</taxon>
        <taxon>Chromatiales</taxon>
        <taxon>Ectothiorhodospiraceae</taxon>
        <taxon>Thioalkalivibrio</taxon>
    </lineage>
</organism>
<sequence length="319" mass="35144">MNPDFLDFEQPIAELEAKIEELRYVGDDAEVNIQEEISRLQAKCKSLTESIFSKLSAWQVAQLARHPRRPYTLDYIGRLFTDFEELHGDRAYADDAAIVGGMARFDGQPVVVIGHQKGRDTKEKIRRNFGMPRPEGYRKALRLMRLAERFRLPVFTFIDTPGAYPGVGAEERGQSEAIAMNLQVMAGLRTPVICTVIGEGGSGGALAIGVGDRVMMLQYSTYSVISPEGCASILWKSAERASDAAEALGITSARLKELGLIDTIIPEPLGGAHRNPEQMAGNLHTALAEALQTFSAMDTDALLERRYGRLMGYGEYKEG</sequence>
<accession>B8GQ68</accession>
<gene>
    <name evidence="1" type="primary">accA</name>
    <name type="ordered locus">Tgr7_1177</name>
</gene>
<dbReference type="EC" id="2.1.3.15" evidence="1"/>
<dbReference type="EMBL" id="CP001339">
    <property type="protein sequence ID" value="ACL72263.1"/>
    <property type="molecule type" value="Genomic_DNA"/>
</dbReference>
<dbReference type="RefSeq" id="WP_012637746.1">
    <property type="nucleotide sequence ID" value="NC_011901.1"/>
</dbReference>
<dbReference type="SMR" id="B8GQ68"/>
<dbReference type="STRING" id="396588.Tgr7_1177"/>
<dbReference type="KEGG" id="tgr:Tgr7_1177"/>
<dbReference type="eggNOG" id="COG0825">
    <property type="taxonomic scope" value="Bacteria"/>
</dbReference>
<dbReference type="HOGENOM" id="CLU_015486_0_2_6"/>
<dbReference type="OrthoDB" id="9808023at2"/>
<dbReference type="UniPathway" id="UPA00655">
    <property type="reaction ID" value="UER00711"/>
</dbReference>
<dbReference type="Proteomes" id="UP000002383">
    <property type="component" value="Chromosome"/>
</dbReference>
<dbReference type="GO" id="GO:0009317">
    <property type="term" value="C:acetyl-CoA carboxylase complex"/>
    <property type="evidence" value="ECO:0007669"/>
    <property type="project" value="InterPro"/>
</dbReference>
<dbReference type="GO" id="GO:0003989">
    <property type="term" value="F:acetyl-CoA carboxylase activity"/>
    <property type="evidence" value="ECO:0007669"/>
    <property type="project" value="InterPro"/>
</dbReference>
<dbReference type="GO" id="GO:0005524">
    <property type="term" value="F:ATP binding"/>
    <property type="evidence" value="ECO:0007669"/>
    <property type="project" value="UniProtKB-KW"/>
</dbReference>
<dbReference type="GO" id="GO:0016743">
    <property type="term" value="F:carboxyl- or carbamoyltransferase activity"/>
    <property type="evidence" value="ECO:0007669"/>
    <property type="project" value="UniProtKB-UniRule"/>
</dbReference>
<dbReference type="GO" id="GO:0006633">
    <property type="term" value="P:fatty acid biosynthetic process"/>
    <property type="evidence" value="ECO:0007669"/>
    <property type="project" value="UniProtKB-KW"/>
</dbReference>
<dbReference type="GO" id="GO:2001295">
    <property type="term" value="P:malonyl-CoA biosynthetic process"/>
    <property type="evidence" value="ECO:0007669"/>
    <property type="project" value="UniProtKB-UniRule"/>
</dbReference>
<dbReference type="FunFam" id="3.90.226.10:FF:000008">
    <property type="entry name" value="Acetyl-coenzyme A carboxylase carboxyl transferase subunit alpha"/>
    <property type="match status" value="1"/>
</dbReference>
<dbReference type="Gene3D" id="3.90.226.10">
    <property type="entry name" value="2-enoyl-CoA Hydratase, Chain A, domain 1"/>
    <property type="match status" value="1"/>
</dbReference>
<dbReference type="HAMAP" id="MF_00823">
    <property type="entry name" value="AcetylCoA_CT_alpha"/>
    <property type="match status" value="1"/>
</dbReference>
<dbReference type="InterPro" id="IPR001095">
    <property type="entry name" value="Acetyl_CoA_COase_a_su"/>
</dbReference>
<dbReference type="InterPro" id="IPR029045">
    <property type="entry name" value="ClpP/crotonase-like_dom_sf"/>
</dbReference>
<dbReference type="InterPro" id="IPR011763">
    <property type="entry name" value="COA_CT_C"/>
</dbReference>
<dbReference type="NCBIfam" id="TIGR00513">
    <property type="entry name" value="accA"/>
    <property type="match status" value="1"/>
</dbReference>
<dbReference type="NCBIfam" id="NF041504">
    <property type="entry name" value="AccA_sub"/>
    <property type="match status" value="1"/>
</dbReference>
<dbReference type="NCBIfam" id="NF004344">
    <property type="entry name" value="PRK05724.1"/>
    <property type="match status" value="1"/>
</dbReference>
<dbReference type="PANTHER" id="PTHR42853">
    <property type="entry name" value="ACETYL-COENZYME A CARBOXYLASE CARBOXYL TRANSFERASE SUBUNIT ALPHA"/>
    <property type="match status" value="1"/>
</dbReference>
<dbReference type="PANTHER" id="PTHR42853:SF3">
    <property type="entry name" value="ACETYL-COENZYME A CARBOXYLASE CARBOXYL TRANSFERASE SUBUNIT ALPHA, CHLOROPLASTIC"/>
    <property type="match status" value="1"/>
</dbReference>
<dbReference type="Pfam" id="PF03255">
    <property type="entry name" value="ACCA"/>
    <property type="match status" value="1"/>
</dbReference>
<dbReference type="PRINTS" id="PR01069">
    <property type="entry name" value="ACCCTRFRASEA"/>
</dbReference>
<dbReference type="SUPFAM" id="SSF52096">
    <property type="entry name" value="ClpP/crotonase"/>
    <property type="match status" value="1"/>
</dbReference>
<dbReference type="PROSITE" id="PS50989">
    <property type="entry name" value="COA_CT_CTER"/>
    <property type="match status" value="1"/>
</dbReference>